<reference key="1">
    <citation type="journal article" date="2002" name="DNA Res.">
        <title>Complete genomic sequence of nitrogen-fixing symbiotic bacterium Bradyrhizobium japonicum USDA110.</title>
        <authorList>
            <person name="Kaneko T."/>
            <person name="Nakamura Y."/>
            <person name="Sato S."/>
            <person name="Minamisawa K."/>
            <person name="Uchiumi T."/>
            <person name="Sasamoto S."/>
            <person name="Watanabe A."/>
            <person name="Idesawa K."/>
            <person name="Iriguchi M."/>
            <person name="Kawashima K."/>
            <person name="Kohara M."/>
            <person name="Matsumoto M."/>
            <person name="Shimpo S."/>
            <person name="Tsuruoka H."/>
            <person name="Wada T."/>
            <person name="Yamada M."/>
            <person name="Tabata S."/>
        </authorList>
    </citation>
    <scope>NUCLEOTIDE SEQUENCE [LARGE SCALE GENOMIC DNA]</scope>
    <source>
        <strain>JCM 10833 / BCRC 13528 / IAM 13628 / NBRC 14792 / USDA 110</strain>
    </source>
</reference>
<organism>
    <name type="scientific">Bradyrhizobium diazoefficiens (strain JCM 10833 / BCRC 13528 / IAM 13628 / NBRC 14792 / USDA 110)</name>
    <dbReference type="NCBI Taxonomy" id="224911"/>
    <lineage>
        <taxon>Bacteria</taxon>
        <taxon>Pseudomonadati</taxon>
        <taxon>Pseudomonadota</taxon>
        <taxon>Alphaproteobacteria</taxon>
        <taxon>Hyphomicrobiales</taxon>
        <taxon>Nitrobacteraceae</taxon>
        <taxon>Bradyrhizobium</taxon>
    </lineage>
</organism>
<gene>
    <name type="primary">pdxA2</name>
    <name type="ordered locus">blr3887</name>
</gene>
<keyword id="KW-0119">Carbohydrate metabolism</keyword>
<keyword id="KW-0479">Metal-binding</keyword>
<keyword id="KW-0520">NAD</keyword>
<keyword id="KW-0560">Oxidoreductase</keyword>
<keyword id="KW-1185">Reference proteome</keyword>
<comment type="function">
    <text evidence="2">Catalyzes the NAD-dependent oxidation and subsequent decarboxylation of D-threonate 4-phosphate to produce dihydroxyacetone phosphate (DHAP).</text>
</comment>
<comment type="catalytic activity">
    <reaction evidence="2">
        <text>4-O-phospho-D-threonate + NAD(+) = dihydroxyacetone phosphate + CO2 + NADH</text>
        <dbReference type="Rhea" id="RHEA:52396"/>
        <dbReference type="ChEBI" id="CHEBI:16526"/>
        <dbReference type="ChEBI" id="CHEBI:57540"/>
        <dbReference type="ChEBI" id="CHEBI:57642"/>
        <dbReference type="ChEBI" id="CHEBI:57945"/>
        <dbReference type="ChEBI" id="CHEBI:136590"/>
        <dbReference type="EC" id="1.1.1.408"/>
    </reaction>
</comment>
<comment type="cofactor">
    <cofactor evidence="1">
        <name>a divalent metal cation</name>
        <dbReference type="ChEBI" id="CHEBI:60240"/>
    </cofactor>
    <text evidence="1">Binds 1 divalent metal cation per subunit.</text>
</comment>
<comment type="subunit">
    <text evidence="2">Homodimer.</text>
</comment>
<comment type="similarity">
    <text evidence="3">Belongs to the PdxA family. PdxA2 subfamily.</text>
</comment>
<protein>
    <recommendedName>
        <fullName evidence="2">Putative D-threonate 4-phosphate dehydrogenase</fullName>
        <ecNumber evidence="2">1.1.1.408</ecNumber>
    </recommendedName>
</protein>
<evidence type="ECO:0000250" key="1">
    <source>
        <dbReference type="UniProtKB" id="P19624"/>
    </source>
</evidence>
<evidence type="ECO:0000250" key="2">
    <source>
        <dbReference type="UniProtKB" id="P58718"/>
    </source>
</evidence>
<evidence type="ECO:0000305" key="3"/>
<sequence>MTSRHLAITMGDPAGIGPEIIVKACLGLKGRIATGDLRLLIIGSGAALDGAKAALGTDVAIPQVSADDREWPNLCYLQADAEGDPIKPGVLSADGGRFAYKAIEQGVRLTQAGRTAAIVTAPLNKEALNKAGYHFPGHTEMLAHLTGVRGSVMLLAHGNMRVSHVSTHVALEDVPKRLTPERLRMVIDLTNDALRRLGIAKPKIAVAALNPHAGEGGLFGRQDIDVSAPTIAKAVADGLDVIGPVPGDTIFVKLRAGQFDAAVAMYHDQGHIPVKLLGFQVDPATGRWQELSGVNITLGLPIIRTSVDHGTAFDIAGKGIANEHSLIEAIDYAERLAAGASASKS</sequence>
<name>PDXA2_BRADU</name>
<feature type="chain" id="PRO_0000188798" description="Putative D-threonate 4-phosphate dehydrogenase">
    <location>
        <begin position="1"/>
        <end position="345"/>
    </location>
</feature>
<feature type="binding site" evidence="1">
    <location>
        <position position="138"/>
    </location>
    <ligand>
        <name>substrate</name>
    </ligand>
</feature>
<feature type="binding site" evidence="1">
    <location>
        <position position="139"/>
    </location>
    <ligand>
        <name>substrate</name>
    </ligand>
</feature>
<feature type="binding site" evidence="1">
    <location>
        <position position="168"/>
    </location>
    <ligand>
        <name>a divalent metal cation</name>
        <dbReference type="ChEBI" id="CHEBI:60240"/>
        <note>ligand shared between dimeric partners</note>
    </ligand>
</feature>
<feature type="binding site" evidence="1">
    <location>
        <position position="212"/>
    </location>
    <ligand>
        <name>a divalent metal cation</name>
        <dbReference type="ChEBI" id="CHEBI:60240"/>
        <note>ligand shared between dimeric partners</note>
    </ligand>
</feature>
<feature type="binding site" evidence="1">
    <location>
        <position position="267"/>
    </location>
    <ligand>
        <name>a divalent metal cation</name>
        <dbReference type="ChEBI" id="CHEBI:60240"/>
        <note>ligand shared between dimeric partners</note>
    </ligand>
</feature>
<feature type="binding site" evidence="1">
    <location>
        <position position="275"/>
    </location>
    <ligand>
        <name>substrate</name>
    </ligand>
</feature>
<feature type="binding site" evidence="1">
    <location>
        <position position="295"/>
    </location>
    <ligand>
        <name>substrate</name>
    </ligand>
</feature>
<feature type="binding site" evidence="1">
    <location>
        <position position="304"/>
    </location>
    <ligand>
        <name>substrate</name>
    </ligand>
</feature>
<accession>Q89NF3</accession>
<proteinExistence type="inferred from homology"/>
<dbReference type="EC" id="1.1.1.408" evidence="2"/>
<dbReference type="EMBL" id="BA000040">
    <property type="protein sequence ID" value="BAC49152.1"/>
    <property type="molecule type" value="Genomic_DNA"/>
</dbReference>
<dbReference type="RefSeq" id="NP_770527.1">
    <property type="nucleotide sequence ID" value="NC_004463.1"/>
</dbReference>
<dbReference type="RefSeq" id="WP_011086666.1">
    <property type="nucleotide sequence ID" value="NC_004463.1"/>
</dbReference>
<dbReference type="SMR" id="Q89NF3"/>
<dbReference type="STRING" id="224911.AAV28_16440"/>
<dbReference type="EnsemblBacteria" id="BAC49152">
    <property type="protein sequence ID" value="BAC49152"/>
    <property type="gene ID" value="BAC49152"/>
</dbReference>
<dbReference type="GeneID" id="46490892"/>
<dbReference type="KEGG" id="bja:blr3887"/>
<dbReference type="PATRIC" id="fig|224911.44.peg.3574"/>
<dbReference type="eggNOG" id="COG1995">
    <property type="taxonomic scope" value="Bacteria"/>
</dbReference>
<dbReference type="HOGENOM" id="CLU_040168_1_0_5"/>
<dbReference type="InParanoid" id="Q89NF3"/>
<dbReference type="OrthoDB" id="9801783at2"/>
<dbReference type="PhylomeDB" id="Q89NF3"/>
<dbReference type="Proteomes" id="UP000002526">
    <property type="component" value="Chromosome"/>
</dbReference>
<dbReference type="GO" id="GO:0046872">
    <property type="term" value="F:metal ion binding"/>
    <property type="evidence" value="ECO:0007669"/>
    <property type="project" value="UniProtKB-KW"/>
</dbReference>
<dbReference type="GO" id="GO:0051287">
    <property type="term" value="F:NAD binding"/>
    <property type="evidence" value="ECO:0007669"/>
    <property type="project" value="InterPro"/>
</dbReference>
<dbReference type="GO" id="GO:0016491">
    <property type="term" value="F:oxidoreductase activity"/>
    <property type="evidence" value="ECO:0007669"/>
    <property type="project" value="UniProtKB-KW"/>
</dbReference>
<dbReference type="Gene3D" id="3.40.718.10">
    <property type="entry name" value="Isopropylmalate Dehydrogenase"/>
    <property type="match status" value="1"/>
</dbReference>
<dbReference type="InterPro" id="IPR005255">
    <property type="entry name" value="PdxA_fam"/>
</dbReference>
<dbReference type="NCBIfam" id="TIGR00557">
    <property type="entry name" value="pdxA"/>
    <property type="match status" value="1"/>
</dbReference>
<dbReference type="PANTHER" id="PTHR30004">
    <property type="entry name" value="4-HYDROXYTHREONINE-4-PHOSPHATE DEHYDROGENASE"/>
    <property type="match status" value="1"/>
</dbReference>
<dbReference type="PANTHER" id="PTHR30004:SF6">
    <property type="entry name" value="D-THREONATE 4-PHOSPHATE DEHYDROGENASE"/>
    <property type="match status" value="1"/>
</dbReference>
<dbReference type="Pfam" id="PF04166">
    <property type="entry name" value="PdxA"/>
    <property type="match status" value="1"/>
</dbReference>
<dbReference type="SUPFAM" id="SSF53659">
    <property type="entry name" value="Isocitrate/Isopropylmalate dehydrogenase-like"/>
    <property type="match status" value="1"/>
</dbReference>